<sequence length="91" mass="10613">MARPTGKKFDKRRQQQNPLFKRKKFCRFTAAGVEQIDYKDTETLKDFIGENGKITPARLTGTKAHYQRQLDTAIKRARFLALLPYTDQHKA</sequence>
<proteinExistence type="inferred from homology"/>
<gene>
    <name evidence="1" type="primary">rpsR</name>
    <name type="ordered locus">BPSL1460</name>
</gene>
<dbReference type="EMBL" id="BX571965">
    <property type="protein sequence ID" value="CAH35462.1"/>
    <property type="molecule type" value="Genomic_DNA"/>
</dbReference>
<dbReference type="RefSeq" id="WP_004193360.1">
    <property type="nucleotide sequence ID" value="NZ_CP009538.1"/>
</dbReference>
<dbReference type="RefSeq" id="YP_108082.1">
    <property type="nucleotide sequence ID" value="NC_006350.1"/>
</dbReference>
<dbReference type="SMR" id="Q63UY4"/>
<dbReference type="STRING" id="272560.BPSL1460"/>
<dbReference type="GeneID" id="93173028"/>
<dbReference type="KEGG" id="bps:BPSL1460"/>
<dbReference type="PATRIC" id="fig|272560.51.peg.3489"/>
<dbReference type="eggNOG" id="COG0238">
    <property type="taxonomic scope" value="Bacteria"/>
</dbReference>
<dbReference type="PRO" id="PR:Q63UY4"/>
<dbReference type="Proteomes" id="UP000000605">
    <property type="component" value="Chromosome 1"/>
</dbReference>
<dbReference type="GO" id="GO:0022627">
    <property type="term" value="C:cytosolic small ribosomal subunit"/>
    <property type="evidence" value="ECO:0007669"/>
    <property type="project" value="TreeGrafter"/>
</dbReference>
<dbReference type="GO" id="GO:0070181">
    <property type="term" value="F:small ribosomal subunit rRNA binding"/>
    <property type="evidence" value="ECO:0007669"/>
    <property type="project" value="TreeGrafter"/>
</dbReference>
<dbReference type="GO" id="GO:0003735">
    <property type="term" value="F:structural constituent of ribosome"/>
    <property type="evidence" value="ECO:0007669"/>
    <property type="project" value="InterPro"/>
</dbReference>
<dbReference type="GO" id="GO:0006412">
    <property type="term" value="P:translation"/>
    <property type="evidence" value="ECO:0007669"/>
    <property type="project" value="UniProtKB-UniRule"/>
</dbReference>
<dbReference type="Gene3D" id="4.10.640.10">
    <property type="entry name" value="Ribosomal protein S18"/>
    <property type="match status" value="1"/>
</dbReference>
<dbReference type="HAMAP" id="MF_00270">
    <property type="entry name" value="Ribosomal_bS18"/>
    <property type="match status" value="1"/>
</dbReference>
<dbReference type="InterPro" id="IPR001648">
    <property type="entry name" value="Ribosomal_bS18"/>
</dbReference>
<dbReference type="InterPro" id="IPR018275">
    <property type="entry name" value="Ribosomal_bS18_CS"/>
</dbReference>
<dbReference type="InterPro" id="IPR036870">
    <property type="entry name" value="Ribosomal_bS18_sf"/>
</dbReference>
<dbReference type="NCBIfam" id="TIGR00165">
    <property type="entry name" value="S18"/>
    <property type="match status" value="1"/>
</dbReference>
<dbReference type="PANTHER" id="PTHR13479">
    <property type="entry name" value="30S RIBOSOMAL PROTEIN S18"/>
    <property type="match status" value="1"/>
</dbReference>
<dbReference type="PANTHER" id="PTHR13479:SF40">
    <property type="entry name" value="SMALL RIBOSOMAL SUBUNIT PROTEIN BS18M"/>
    <property type="match status" value="1"/>
</dbReference>
<dbReference type="Pfam" id="PF01084">
    <property type="entry name" value="Ribosomal_S18"/>
    <property type="match status" value="1"/>
</dbReference>
<dbReference type="PRINTS" id="PR00974">
    <property type="entry name" value="RIBOSOMALS18"/>
</dbReference>
<dbReference type="SUPFAM" id="SSF46911">
    <property type="entry name" value="Ribosomal protein S18"/>
    <property type="match status" value="1"/>
</dbReference>
<dbReference type="PROSITE" id="PS00057">
    <property type="entry name" value="RIBOSOMAL_S18"/>
    <property type="match status" value="1"/>
</dbReference>
<reference key="1">
    <citation type="journal article" date="2004" name="Proc. Natl. Acad. Sci. U.S.A.">
        <title>Genomic plasticity of the causative agent of melioidosis, Burkholderia pseudomallei.</title>
        <authorList>
            <person name="Holden M.T.G."/>
            <person name="Titball R.W."/>
            <person name="Peacock S.J."/>
            <person name="Cerdeno-Tarraga A.-M."/>
            <person name="Atkins T."/>
            <person name="Crossman L.C."/>
            <person name="Pitt T."/>
            <person name="Churcher C."/>
            <person name="Mungall K.L."/>
            <person name="Bentley S.D."/>
            <person name="Sebaihia M."/>
            <person name="Thomson N.R."/>
            <person name="Bason N."/>
            <person name="Beacham I.R."/>
            <person name="Brooks K."/>
            <person name="Brown K.A."/>
            <person name="Brown N.F."/>
            <person name="Challis G.L."/>
            <person name="Cherevach I."/>
            <person name="Chillingworth T."/>
            <person name="Cronin A."/>
            <person name="Crossett B."/>
            <person name="Davis P."/>
            <person name="DeShazer D."/>
            <person name="Feltwell T."/>
            <person name="Fraser A."/>
            <person name="Hance Z."/>
            <person name="Hauser H."/>
            <person name="Holroyd S."/>
            <person name="Jagels K."/>
            <person name="Keith K.E."/>
            <person name="Maddison M."/>
            <person name="Moule S."/>
            <person name="Price C."/>
            <person name="Quail M.A."/>
            <person name="Rabbinowitsch E."/>
            <person name="Rutherford K."/>
            <person name="Sanders M."/>
            <person name="Simmonds M."/>
            <person name="Songsivilai S."/>
            <person name="Stevens K."/>
            <person name="Tumapa S."/>
            <person name="Vesaratchavest M."/>
            <person name="Whitehead S."/>
            <person name="Yeats C."/>
            <person name="Barrell B.G."/>
            <person name="Oyston P.C.F."/>
            <person name="Parkhill J."/>
        </authorList>
    </citation>
    <scope>NUCLEOTIDE SEQUENCE [LARGE SCALE GENOMIC DNA]</scope>
    <source>
        <strain>K96243</strain>
    </source>
</reference>
<comment type="function">
    <text evidence="1">Binds as a heterodimer with protein bS6 to the central domain of the 16S rRNA, where it helps stabilize the platform of the 30S subunit.</text>
</comment>
<comment type="subunit">
    <text evidence="1">Part of the 30S ribosomal subunit. Forms a tight heterodimer with protein bS6.</text>
</comment>
<comment type="similarity">
    <text evidence="1">Belongs to the bacterial ribosomal protein bS18 family.</text>
</comment>
<feature type="chain" id="PRO_0000111134" description="Small ribosomal subunit protein bS18">
    <location>
        <begin position="1"/>
        <end position="91"/>
    </location>
</feature>
<protein>
    <recommendedName>
        <fullName evidence="1">Small ribosomal subunit protein bS18</fullName>
    </recommendedName>
    <alternativeName>
        <fullName evidence="2">30S ribosomal protein S18</fullName>
    </alternativeName>
</protein>
<evidence type="ECO:0000255" key="1">
    <source>
        <dbReference type="HAMAP-Rule" id="MF_00270"/>
    </source>
</evidence>
<evidence type="ECO:0000305" key="2"/>
<name>RS18_BURPS</name>
<keyword id="KW-1185">Reference proteome</keyword>
<keyword id="KW-0687">Ribonucleoprotein</keyword>
<keyword id="KW-0689">Ribosomal protein</keyword>
<keyword id="KW-0694">RNA-binding</keyword>
<keyword id="KW-0699">rRNA-binding</keyword>
<accession>Q63UY4</accession>
<organism>
    <name type="scientific">Burkholderia pseudomallei (strain K96243)</name>
    <dbReference type="NCBI Taxonomy" id="272560"/>
    <lineage>
        <taxon>Bacteria</taxon>
        <taxon>Pseudomonadati</taxon>
        <taxon>Pseudomonadota</taxon>
        <taxon>Betaproteobacteria</taxon>
        <taxon>Burkholderiales</taxon>
        <taxon>Burkholderiaceae</taxon>
        <taxon>Burkholderia</taxon>
        <taxon>pseudomallei group</taxon>
    </lineage>
</organism>